<accession>B5E6H9</accession>
<keyword id="KW-0687">Ribonucleoprotein</keyword>
<keyword id="KW-0689">Ribosomal protein</keyword>
<keyword id="KW-0694">RNA-binding</keyword>
<keyword id="KW-0699">rRNA-binding</keyword>
<protein>
    <recommendedName>
        <fullName evidence="1">Small ribosomal subunit protein uS11</fullName>
    </recommendedName>
    <alternativeName>
        <fullName evidence="2">30S ribosomal protein S11</fullName>
    </alternativeName>
</protein>
<gene>
    <name evidence="1" type="primary">rpsK</name>
    <name type="ordered locus">SPG_0219</name>
</gene>
<reference key="1">
    <citation type="journal article" date="2001" name="Microb. Drug Resist.">
        <title>Annotated draft genomic sequence from a Streptococcus pneumoniae type 19F clinical isolate.</title>
        <authorList>
            <person name="Dopazo J."/>
            <person name="Mendoza A."/>
            <person name="Herrero J."/>
            <person name="Caldara F."/>
            <person name="Humbert Y."/>
            <person name="Friedli L."/>
            <person name="Guerrier M."/>
            <person name="Grand-Schenk E."/>
            <person name="Gandin C."/>
            <person name="de Francesco M."/>
            <person name="Polissi A."/>
            <person name="Buell G."/>
            <person name="Feger G."/>
            <person name="Garcia E."/>
            <person name="Peitsch M."/>
            <person name="Garcia-Bustos J.F."/>
        </authorList>
    </citation>
    <scope>NUCLEOTIDE SEQUENCE [LARGE SCALE GENOMIC DNA]</scope>
    <source>
        <strain>G54</strain>
    </source>
</reference>
<reference key="2">
    <citation type="submission" date="2008-03" db="EMBL/GenBank/DDBJ databases">
        <title>Pneumococcal beta glucoside metabolism investigated by whole genome comparison.</title>
        <authorList>
            <person name="Mulas L."/>
            <person name="Trappetti C."/>
            <person name="Hakenbeck R."/>
            <person name="Iannelli F."/>
            <person name="Pozzi G."/>
            <person name="Davidsen T.M."/>
            <person name="Tettelin H."/>
            <person name="Oggioni M."/>
        </authorList>
    </citation>
    <scope>NUCLEOTIDE SEQUENCE [LARGE SCALE GENOMIC DNA]</scope>
    <source>
        <strain>G54</strain>
    </source>
</reference>
<dbReference type="EMBL" id="CP001015">
    <property type="protein sequence ID" value="ACF56244.1"/>
    <property type="molecule type" value="Genomic_DNA"/>
</dbReference>
<dbReference type="SMR" id="B5E6H9"/>
<dbReference type="KEGG" id="spx:SPG_0219"/>
<dbReference type="HOGENOM" id="CLU_072439_5_0_9"/>
<dbReference type="GO" id="GO:1990904">
    <property type="term" value="C:ribonucleoprotein complex"/>
    <property type="evidence" value="ECO:0007669"/>
    <property type="project" value="UniProtKB-KW"/>
</dbReference>
<dbReference type="GO" id="GO:0005840">
    <property type="term" value="C:ribosome"/>
    <property type="evidence" value="ECO:0007669"/>
    <property type="project" value="UniProtKB-KW"/>
</dbReference>
<dbReference type="GO" id="GO:0019843">
    <property type="term" value="F:rRNA binding"/>
    <property type="evidence" value="ECO:0007669"/>
    <property type="project" value="UniProtKB-UniRule"/>
</dbReference>
<dbReference type="GO" id="GO:0003735">
    <property type="term" value="F:structural constituent of ribosome"/>
    <property type="evidence" value="ECO:0007669"/>
    <property type="project" value="InterPro"/>
</dbReference>
<dbReference type="GO" id="GO:0006412">
    <property type="term" value="P:translation"/>
    <property type="evidence" value="ECO:0007669"/>
    <property type="project" value="UniProtKB-UniRule"/>
</dbReference>
<dbReference type="FunFam" id="3.30.420.80:FF:000001">
    <property type="entry name" value="30S ribosomal protein S11"/>
    <property type="match status" value="1"/>
</dbReference>
<dbReference type="Gene3D" id="3.30.420.80">
    <property type="entry name" value="Ribosomal protein S11"/>
    <property type="match status" value="1"/>
</dbReference>
<dbReference type="HAMAP" id="MF_01310">
    <property type="entry name" value="Ribosomal_uS11"/>
    <property type="match status" value="1"/>
</dbReference>
<dbReference type="InterPro" id="IPR001971">
    <property type="entry name" value="Ribosomal_uS11"/>
</dbReference>
<dbReference type="InterPro" id="IPR019981">
    <property type="entry name" value="Ribosomal_uS11_bac-type"/>
</dbReference>
<dbReference type="InterPro" id="IPR018102">
    <property type="entry name" value="Ribosomal_uS11_CS"/>
</dbReference>
<dbReference type="InterPro" id="IPR036967">
    <property type="entry name" value="Ribosomal_uS11_sf"/>
</dbReference>
<dbReference type="NCBIfam" id="NF003698">
    <property type="entry name" value="PRK05309.1"/>
    <property type="match status" value="1"/>
</dbReference>
<dbReference type="NCBIfam" id="TIGR03632">
    <property type="entry name" value="uS11_bact"/>
    <property type="match status" value="1"/>
</dbReference>
<dbReference type="PANTHER" id="PTHR11759">
    <property type="entry name" value="40S RIBOSOMAL PROTEIN S14/30S RIBOSOMAL PROTEIN S11"/>
    <property type="match status" value="1"/>
</dbReference>
<dbReference type="Pfam" id="PF00411">
    <property type="entry name" value="Ribosomal_S11"/>
    <property type="match status" value="1"/>
</dbReference>
<dbReference type="PIRSF" id="PIRSF002131">
    <property type="entry name" value="Ribosomal_S11"/>
    <property type="match status" value="1"/>
</dbReference>
<dbReference type="SUPFAM" id="SSF53137">
    <property type="entry name" value="Translational machinery components"/>
    <property type="match status" value="1"/>
</dbReference>
<dbReference type="PROSITE" id="PS00054">
    <property type="entry name" value="RIBOSOMAL_S11"/>
    <property type="match status" value="1"/>
</dbReference>
<proteinExistence type="inferred from homology"/>
<organism>
    <name type="scientific">Streptococcus pneumoniae serotype 19F (strain G54)</name>
    <dbReference type="NCBI Taxonomy" id="512566"/>
    <lineage>
        <taxon>Bacteria</taxon>
        <taxon>Bacillati</taxon>
        <taxon>Bacillota</taxon>
        <taxon>Bacilli</taxon>
        <taxon>Lactobacillales</taxon>
        <taxon>Streptococcaceae</taxon>
        <taxon>Streptococcus</taxon>
    </lineage>
</organism>
<feature type="chain" id="PRO_1000141146" description="Small ribosomal subunit protein uS11">
    <location>
        <begin position="1"/>
        <end position="127"/>
    </location>
</feature>
<comment type="function">
    <text evidence="1">Located on the platform of the 30S subunit, it bridges several disparate RNA helices of the 16S rRNA. Forms part of the Shine-Dalgarno cleft in the 70S ribosome.</text>
</comment>
<comment type="subunit">
    <text evidence="1">Part of the 30S ribosomal subunit. Interacts with proteins S7 and S18. Binds to IF-3.</text>
</comment>
<comment type="similarity">
    <text evidence="1">Belongs to the universal ribosomal protein uS11 family.</text>
</comment>
<evidence type="ECO:0000255" key="1">
    <source>
        <dbReference type="HAMAP-Rule" id="MF_01310"/>
    </source>
</evidence>
<evidence type="ECO:0000305" key="2"/>
<name>RS11_STRP4</name>
<sequence>MAKPTRKRRVKKNIESGIAHIHATFNNTIVMITDVHGNAIAWSSAGALGFKGSRKSTPFAAQMASEAAAKSAQEHGLKSVEVTVKGPGSGRESAIRALAAAGLEVTAIRDVTPVPHNGARPPKRRRV</sequence>